<keyword id="KW-0963">Cytoplasm</keyword>
<keyword id="KW-0251">Elongation factor</keyword>
<keyword id="KW-0648">Protein biosynthesis</keyword>
<feature type="chain" id="PRO_0000241493" description="Elongation factor Ts">
    <location>
        <begin position="1"/>
        <end position="295"/>
    </location>
</feature>
<feature type="region of interest" description="Involved in Mg(2+) ion dislocation from EF-Tu" evidence="1">
    <location>
        <begin position="79"/>
        <end position="82"/>
    </location>
</feature>
<organism>
    <name type="scientific">Mycoplasma capricolum subsp. capricolum (strain California kid / ATCC 27343 / NCTC 10154)</name>
    <dbReference type="NCBI Taxonomy" id="340047"/>
    <lineage>
        <taxon>Bacteria</taxon>
        <taxon>Bacillati</taxon>
        <taxon>Mycoplasmatota</taxon>
        <taxon>Mollicutes</taxon>
        <taxon>Mycoplasmataceae</taxon>
        <taxon>Mycoplasma</taxon>
    </lineage>
</organism>
<gene>
    <name evidence="1" type="primary">tsf</name>
    <name type="ordered locus">MCAP_0372</name>
</gene>
<proteinExistence type="inferred from homology"/>
<dbReference type="EMBL" id="CP000123">
    <property type="protein sequence ID" value="ABC01780.1"/>
    <property type="molecule type" value="Genomic_DNA"/>
</dbReference>
<dbReference type="RefSeq" id="WP_011387257.1">
    <property type="nucleotide sequence ID" value="NC_007633.1"/>
</dbReference>
<dbReference type="SMR" id="Q2SSA7"/>
<dbReference type="GeneID" id="23778672"/>
<dbReference type="KEGG" id="mcp:MCAP_0372"/>
<dbReference type="HOGENOM" id="CLU_047155_0_2_14"/>
<dbReference type="PhylomeDB" id="Q2SSA7"/>
<dbReference type="Proteomes" id="UP000001928">
    <property type="component" value="Chromosome"/>
</dbReference>
<dbReference type="GO" id="GO:0005737">
    <property type="term" value="C:cytoplasm"/>
    <property type="evidence" value="ECO:0007669"/>
    <property type="project" value="UniProtKB-SubCell"/>
</dbReference>
<dbReference type="GO" id="GO:0003746">
    <property type="term" value="F:translation elongation factor activity"/>
    <property type="evidence" value="ECO:0007669"/>
    <property type="project" value="UniProtKB-UniRule"/>
</dbReference>
<dbReference type="CDD" id="cd14275">
    <property type="entry name" value="UBA_EF-Ts"/>
    <property type="match status" value="1"/>
</dbReference>
<dbReference type="FunFam" id="1.10.8.10:FF:000001">
    <property type="entry name" value="Elongation factor Ts"/>
    <property type="match status" value="1"/>
</dbReference>
<dbReference type="Gene3D" id="1.10.286.20">
    <property type="match status" value="1"/>
</dbReference>
<dbReference type="Gene3D" id="1.10.8.10">
    <property type="entry name" value="DNA helicase RuvA subunit, C-terminal domain"/>
    <property type="match status" value="1"/>
</dbReference>
<dbReference type="Gene3D" id="3.30.479.20">
    <property type="entry name" value="Elongation factor Ts, dimerisation domain"/>
    <property type="match status" value="2"/>
</dbReference>
<dbReference type="HAMAP" id="MF_00050">
    <property type="entry name" value="EF_Ts"/>
    <property type="match status" value="1"/>
</dbReference>
<dbReference type="InterPro" id="IPR036402">
    <property type="entry name" value="EF-Ts_dimer_sf"/>
</dbReference>
<dbReference type="InterPro" id="IPR001816">
    <property type="entry name" value="Transl_elong_EFTs/EF1B"/>
</dbReference>
<dbReference type="InterPro" id="IPR014039">
    <property type="entry name" value="Transl_elong_EFTs/EF1B_dimer"/>
</dbReference>
<dbReference type="InterPro" id="IPR018101">
    <property type="entry name" value="Transl_elong_Ts_CS"/>
</dbReference>
<dbReference type="InterPro" id="IPR009060">
    <property type="entry name" value="UBA-like_sf"/>
</dbReference>
<dbReference type="NCBIfam" id="TIGR00116">
    <property type="entry name" value="tsf"/>
    <property type="match status" value="1"/>
</dbReference>
<dbReference type="PANTHER" id="PTHR11741">
    <property type="entry name" value="ELONGATION FACTOR TS"/>
    <property type="match status" value="1"/>
</dbReference>
<dbReference type="PANTHER" id="PTHR11741:SF0">
    <property type="entry name" value="ELONGATION FACTOR TS, MITOCHONDRIAL"/>
    <property type="match status" value="1"/>
</dbReference>
<dbReference type="Pfam" id="PF00889">
    <property type="entry name" value="EF_TS"/>
    <property type="match status" value="1"/>
</dbReference>
<dbReference type="SUPFAM" id="SSF54713">
    <property type="entry name" value="Elongation factor Ts (EF-Ts), dimerisation domain"/>
    <property type="match status" value="2"/>
</dbReference>
<dbReference type="SUPFAM" id="SSF46934">
    <property type="entry name" value="UBA-like"/>
    <property type="match status" value="1"/>
</dbReference>
<dbReference type="PROSITE" id="PS01126">
    <property type="entry name" value="EF_TS_1"/>
    <property type="match status" value="1"/>
</dbReference>
<dbReference type="PROSITE" id="PS01127">
    <property type="entry name" value="EF_TS_2"/>
    <property type="match status" value="1"/>
</dbReference>
<accession>Q2SSA7</accession>
<reference key="1">
    <citation type="submission" date="2005-09" db="EMBL/GenBank/DDBJ databases">
        <authorList>
            <person name="Glass J.I."/>
            <person name="Lartigue C."/>
            <person name="Pfannkoch C."/>
            <person name="Baden-Tillson H."/>
            <person name="Smith H.O."/>
            <person name="Venter J.C."/>
            <person name="Roske K."/>
            <person name="Wise K.S."/>
            <person name="Calcutt M.J."/>
            <person name="Nelson W.C."/>
            <person name="Nierman W.C."/>
        </authorList>
    </citation>
    <scope>NUCLEOTIDE SEQUENCE [LARGE SCALE GENOMIC DNA]</scope>
    <source>
        <strain>California kid / ATCC 27343 / NCTC 10154</strain>
    </source>
</reference>
<name>EFTS_MYCCT</name>
<evidence type="ECO:0000255" key="1">
    <source>
        <dbReference type="HAMAP-Rule" id="MF_00050"/>
    </source>
</evidence>
<protein>
    <recommendedName>
        <fullName evidence="1">Elongation factor Ts</fullName>
        <shortName evidence="1">EF-Ts</shortName>
    </recommendedName>
</protein>
<comment type="function">
    <text evidence="1">Associates with the EF-Tu.GDP complex and induces the exchange of GDP to GTP. It remains bound to the aminoacyl-tRNA.EF-Tu.GTP complex up to the GTP hydrolysis stage on the ribosome.</text>
</comment>
<comment type="subcellular location">
    <subcellularLocation>
        <location evidence="1">Cytoplasm</location>
    </subcellularLocation>
</comment>
<comment type="similarity">
    <text evidence="1">Belongs to the EF-Ts family.</text>
</comment>
<sequence length="295" mass="32465">MAVDAKLIKELREITQAGMMDCKKALEASDNNIDNAIVWLRENGLAKAAKKTDRVAAEGIALAKENDQKIVILEVNSETDFVAKNEKFLSLVDEIANALLSSNASSLEEGLQVKTNSGLTIEQSLISATATIGEKIALRRFELVNKTSGSSVIYNHANKRVSTLLVFDNKLDSTDAYNVAMHVAAMAPKYINMDQIPDDFKNAEMHIIKEQAKDDAKLQAKPANVLENILKGKLSKRLAEVSLLDQLFVIDESFKVGDFLKSKHVSLVKMIRYEVGEGIEKVVTNFADEVAAQLK</sequence>